<dbReference type="EC" id="4.1.1.39" evidence="1"/>
<dbReference type="EMBL" id="X63661">
    <property type="protein sequence ID" value="CAA45201.1"/>
    <property type="molecule type" value="Genomic_DNA"/>
</dbReference>
<dbReference type="PIR" id="S19219">
    <property type="entry name" value="RKSZLX"/>
</dbReference>
<dbReference type="SMR" id="P26962"/>
<dbReference type="GO" id="GO:0009507">
    <property type="term" value="C:chloroplast"/>
    <property type="evidence" value="ECO:0007669"/>
    <property type="project" value="UniProtKB-SubCell"/>
</dbReference>
<dbReference type="GO" id="GO:0000287">
    <property type="term" value="F:magnesium ion binding"/>
    <property type="evidence" value="ECO:0007669"/>
    <property type="project" value="UniProtKB-UniRule"/>
</dbReference>
<dbReference type="GO" id="GO:0004497">
    <property type="term" value="F:monooxygenase activity"/>
    <property type="evidence" value="ECO:0007669"/>
    <property type="project" value="UniProtKB-KW"/>
</dbReference>
<dbReference type="GO" id="GO:0016984">
    <property type="term" value="F:ribulose-bisphosphate carboxylase activity"/>
    <property type="evidence" value="ECO:0007669"/>
    <property type="project" value="UniProtKB-UniRule"/>
</dbReference>
<dbReference type="GO" id="GO:0009853">
    <property type="term" value="P:photorespiration"/>
    <property type="evidence" value="ECO:0007669"/>
    <property type="project" value="UniProtKB-KW"/>
</dbReference>
<dbReference type="GO" id="GO:0019253">
    <property type="term" value="P:reductive pentose-phosphate cycle"/>
    <property type="evidence" value="ECO:0007669"/>
    <property type="project" value="UniProtKB-UniRule"/>
</dbReference>
<dbReference type="CDD" id="cd08212">
    <property type="entry name" value="RuBisCO_large_I"/>
    <property type="match status" value="1"/>
</dbReference>
<dbReference type="FunFam" id="3.20.20.110:FF:000001">
    <property type="entry name" value="Ribulose bisphosphate carboxylase large chain"/>
    <property type="match status" value="1"/>
</dbReference>
<dbReference type="FunFam" id="3.30.70.150:FF:000001">
    <property type="entry name" value="Ribulose bisphosphate carboxylase large chain"/>
    <property type="match status" value="1"/>
</dbReference>
<dbReference type="Gene3D" id="3.20.20.110">
    <property type="entry name" value="Ribulose bisphosphate carboxylase, large subunit, C-terminal domain"/>
    <property type="match status" value="1"/>
</dbReference>
<dbReference type="Gene3D" id="3.30.70.150">
    <property type="entry name" value="RuBisCO large subunit, N-terminal domain"/>
    <property type="match status" value="1"/>
</dbReference>
<dbReference type="HAMAP" id="MF_01338">
    <property type="entry name" value="RuBisCO_L_type1"/>
    <property type="match status" value="1"/>
</dbReference>
<dbReference type="InterPro" id="IPR033966">
    <property type="entry name" value="RuBisCO"/>
</dbReference>
<dbReference type="InterPro" id="IPR020878">
    <property type="entry name" value="RuBisCo_large_chain_AS"/>
</dbReference>
<dbReference type="InterPro" id="IPR000685">
    <property type="entry name" value="RuBisCO_lsu_C"/>
</dbReference>
<dbReference type="InterPro" id="IPR036376">
    <property type="entry name" value="RuBisCO_lsu_C_sf"/>
</dbReference>
<dbReference type="InterPro" id="IPR017443">
    <property type="entry name" value="RuBisCO_lsu_fd_N"/>
</dbReference>
<dbReference type="InterPro" id="IPR036422">
    <property type="entry name" value="RuBisCO_lsu_N_sf"/>
</dbReference>
<dbReference type="InterPro" id="IPR020888">
    <property type="entry name" value="RuBisCO_lsuI"/>
</dbReference>
<dbReference type="NCBIfam" id="NF003252">
    <property type="entry name" value="PRK04208.1"/>
    <property type="match status" value="1"/>
</dbReference>
<dbReference type="PANTHER" id="PTHR42704">
    <property type="entry name" value="RIBULOSE BISPHOSPHATE CARBOXYLASE"/>
    <property type="match status" value="1"/>
</dbReference>
<dbReference type="PANTHER" id="PTHR42704:SF15">
    <property type="entry name" value="RIBULOSE BISPHOSPHATE CARBOXYLASE LARGE CHAIN"/>
    <property type="match status" value="1"/>
</dbReference>
<dbReference type="Pfam" id="PF00016">
    <property type="entry name" value="RuBisCO_large"/>
    <property type="match status" value="1"/>
</dbReference>
<dbReference type="Pfam" id="PF02788">
    <property type="entry name" value="RuBisCO_large_N"/>
    <property type="match status" value="1"/>
</dbReference>
<dbReference type="SFLD" id="SFLDG01052">
    <property type="entry name" value="RuBisCO"/>
    <property type="match status" value="1"/>
</dbReference>
<dbReference type="SFLD" id="SFLDS00014">
    <property type="entry name" value="RuBisCO"/>
    <property type="match status" value="1"/>
</dbReference>
<dbReference type="SFLD" id="SFLDG00301">
    <property type="entry name" value="RuBisCO-like_proteins"/>
    <property type="match status" value="1"/>
</dbReference>
<dbReference type="SUPFAM" id="SSF51649">
    <property type="entry name" value="RuBisCo, C-terminal domain"/>
    <property type="match status" value="1"/>
</dbReference>
<dbReference type="SUPFAM" id="SSF54966">
    <property type="entry name" value="RuBisCO, large subunit, small (N-terminal) domain"/>
    <property type="match status" value="1"/>
</dbReference>
<dbReference type="PROSITE" id="PS00157">
    <property type="entry name" value="RUBISCO_LARGE"/>
    <property type="match status" value="1"/>
</dbReference>
<reference key="1">
    <citation type="submission" date="1992-01" db="EMBL/GenBank/DDBJ databases">
        <authorList>
            <person name="Doerksen A.H."/>
            <person name="Strauss S."/>
            <person name="Price R."/>
        </authorList>
    </citation>
    <scope>NUCLEOTIDE SEQUENCE [GENOMIC DNA]</scope>
</reference>
<comment type="function">
    <text evidence="1">RuBisCO catalyzes two reactions: the carboxylation of D-ribulose 1,5-bisphosphate, the primary event in carbon dioxide fixation, as well as the oxidative fragmentation of the pentose substrate in the photorespiration process. Both reactions occur simultaneously and in competition at the same active site.</text>
</comment>
<comment type="catalytic activity">
    <reaction evidence="1">
        <text>2 (2R)-3-phosphoglycerate + 2 H(+) = D-ribulose 1,5-bisphosphate + CO2 + H2O</text>
        <dbReference type="Rhea" id="RHEA:23124"/>
        <dbReference type="ChEBI" id="CHEBI:15377"/>
        <dbReference type="ChEBI" id="CHEBI:15378"/>
        <dbReference type="ChEBI" id="CHEBI:16526"/>
        <dbReference type="ChEBI" id="CHEBI:57870"/>
        <dbReference type="ChEBI" id="CHEBI:58272"/>
        <dbReference type="EC" id="4.1.1.39"/>
    </reaction>
</comment>
<comment type="catalytic activity">
    <reaction evidence="1">
        <text>D-ribulose 1,5-bisphosphate + O2 = 2-phosphoglycolate + (2R)-3-phosphoglycerate + 2 H(+)</text>
        <dbReference type="Rhea" id="RHEA:36631"/>
        <dbReference type="ChEBI" id="CHEBI:15378"/>
        <dbReference type="ChEBI" id="CHEBI:15379"/>
        <dbReference type="ChEBI" id="CHEBI:57870"/>
        <dbReference type="ChEBI" id="CHEBI:58033"/>
        <dbReference type="ChEBI" id="CHEBI:58272"/>
    </reaction>
</comment>
<comment type="cofactor">
    <cofactor evidence="1">
        <name>Mg(2+)</name>
        <dbReference type="ChEBI" id="CHEBI:18420"/>
    </cofactor>
    <text evidence="1">Binds 1 Mg(2+) ion per subunit.</text>
</comment>
<comment type="subunit">
    <text evidence="1">Heterohexadecamer of 8 large chains and 8 small chains; disulfide-linked. The disulfide link is formed within the large subunit homodimers.</text>
</comment>
<comment type="subcellular location">
    <subcellularLocation>
        <location>Plastid</location>
        <location>Chloroplast</location>
    </subcellularLocation>
</comment>
<comment type="PTM">
    <text evidence="1">The disulfide bond which can form in the large chain dimeric partners within the hexadecamer appears to be associated with oxidative stress and protein turnover.</text>
</comment>
<comment type="miscellaneous">
    <text evidence="1">The basic functional RuBisCO is composed of a large chain homodimer in a 'head-to-tail' conformation. In form I RuBisCO this homodimer is arranged in a barrel-like tetramer with the small subunits forming a tetrameric 'cap' on each end of the 'barrel'.</text>
</comment>
<comment type="similarity">
    <text evidence="1">Belongs to the RuBisCO large chain family. Type I subfamily.</text>
</comment>
<proteinExistence type="inferred from homology"/>
<accession>P26962</accession>
<sequence>MSPKTETKASVGFKAGVKDYRLTYYTPEYQTKDTDILAAFRVTPQPGVPAEEAGAAVAAESSTGTWTTVWTDGLTSLDRYKGRCYDIEPVPGEENQFIAYVAYPLDLFEEGSVTNLFTSIVGNVFGFKALRALRLEDLRIPPAYSKTFQGPPHGIQVERDKLNKYGRPLLGCTIKPKLGLSAKNYGRAVYECLRGGLDFTKDDENVNSQPFMRWRDRFVFCAEAINKAQAETGEIKGHYLNATAGTCEEMMKRAVFARELGVPIVMHDYLTGGFTANTSLAHYCRDNGLLLHIHRAMHAVIDRQRNHGMHFRVLAKALRMSGGDHIHAGTVVGKLEGERDVTLGFVDLLRDDFIEKDRSRGIYFTQDWVSMPGVLPVASGGIHVWHMPALTEIFGDDSVLQFGGGTLGHPWGNAPGAVANRVALEACVQARNEGRDLAREGNEVIREACKWSPELAAACEIWKEIKFEFDVIDRL</sequence>
<organism>
    <name type="scientific">Pinus balfouriana</name>
    <name type="common">Foxtail pine</name>
    <dbReference type="NCBI Taxonomy" id="3338"/>
    <lineage>
        <taxon>Eukaryota</taxon>
        <taxon>Viridiplantae</taxon>
        <taxon>Streptophyta</taxon>
        <taxon>Embryophyta</taxon>
        <taxon>Tracheophyta</taxon>
        <taxon>Spermatophyta</taxon>
        <taxon>Pinopsida</taxon>
        <taxon>Pinidae</taxon>
        <taxon>Conifers I</taxon>
        <taxon>Pinales</taxon>
        <taxon>Pinaceae</taxon>
        <taxon>Pinus</taxon>
        <taxon>Pinus subgen. Strobus</taxon>
    </lineage>
</organism>
<protein>
    <recommendedName>
        <fullName evidence="1">Ribulose bisphosphate carboxylase large chain</fullName>
        <shortName evidence="1">RuBisCO large subunit</shortName>
        <ecNumber evidence="1">4.1.1.39</ecNumber>
    </recommendedName>
</protein>
<name>RBL_PINBA</name>
<geneLocation type="chloroplast"/>
<gene>
    <name evidence="1" type="primary">rbcL</name>
</gene>
<evidence type="ECO:0000255" key="1">
    <source>
        <dbReference type="HAMAP-Rule" id="MF_01338"/>
    </source>
</evidence>
<feature type="propeptide" id="PRO_0000031355" evidence="1">
    <location>
        <begin position="1"/>
        <end position="2"/>
    </location>
</feature>
<feature type="chain" id="PRO_0000031356" description="Ribulose bisphosphate carboxylase large chain">
    <location>
        <begin position="3"/>
        <end position="475"/>
    </location>
</feature>
<feature type="active site" description="Proton acceptor" evidence="1">
    <location>
        <position position="175"/>
    </location>
</feature>
<feature type="active site" description="Proton acceptor" evidence="1">
    <location>
        <position position="294"/>
    </location>
</feature>
<feature type="binding site" description="in homodimeric partner" evidence="1">
    <location>
        <position position="123"/>
    </location>
    <ligand>
        <name>substrate</name>
    </ligand>
</feature>
<feature type="binding site" evidence="1">
    <location>
        <position position="173"/>
    </location>
    <ligand>
        <name>substrate</name>
    </ligand>
</feature>
<feature type="binding site" evidence="1">
    <location>
        <position position="177"/>
    </location>
    <ligand>
        <name>substrate</name>
    </ligand>
</feature>
<feature type="binding site" description="via carbamate group" evidence="1">
    <location>
        <position position="201"/>
    </location>
    <ligand>
        <name>Mg(2+)</name>
        <dbReference type="ChEBI" id="CHEBI:18420"/>
    </ligand>
</feature>
<feature type="binding site" evidence="1">
    <location>
        <position position="203"/>
    </location>
    <ligand>
        <name>Mg(2+)</name>
        <dbReference type="ChEBI" id="CHEBI:18420"/>
    </ligand>
</feature>
<feature type="binding site" evidence="1">
    <location>
        <position position="204"/>
    </location>
    <ligand>
        <name>Mg(2+)</name>
        <dbReference type="ChEBI" id="CHEBI:18420"/>
    </ligand>
</feature>
<feature type="binding site" evidence="1">
    <location>
        <position position="295"/>
    </location>
    <ligand>
        <name>substrate</name>
    </ligand>
</feature>
<feature type="binding site" evidence="1">
    <location>
        <position position="327"/>
    </location>
    <ligand>
        <name>substrate</name>
    </ligand>
</feature>
<feature type="binding site" evidence="1">
    <location>
        <position position="379"/>
    </location>
    <ligand>
        <name>substrate</name>
    </ligand>
</feature>
<feature type="site" description="Transition state stabilizer" evidence="1">
    <location>
        <position position="334"/>
    </location>
</feature>
<feature type="modified residue" description="N-acetylproline" evidence="1">
    <location>
        <position position="3"/>
    </location>
</feature>
<feature type="modified residue" description="N6,N6,N6-trimethyllysine" evidence="1">
    <location>
        <position position="14"/>
    </location>
</feature>
<feature type="modified residue" description="N6-carboxylysine" evidence="1">
    <location>
        <position position="201"/>
    </location>
</feature>
<feature type="disulfide bond" description="Interchain; in linked form" evidence="1">
    <location>
        <position position="247"/>
    </location>
</feature>
<keyword id="KW-0007">Acetylation</keyword>
<keyword id="KW-0113">Calvin cycle</keyword>
<keyword id="KW-0120">Carbon dioxide fixation</keyword>
<keyword id="KW-0150">Chloroplast</keyword>
<keyword id="KW-1015">Disulfide bond</keyword>
<keyword id="KW-0456">Lyase</keyword>
<keyword id="KW-0460">Magnesium</keyword>
<keyword id="KW-0479">Metal-binding</keyword>
<keyword id="KW-0488">Methylation</keyword>
<keyword id="KW-0503">Monooxygenase</keyword>
<keyword id="KW-0560">Oxidoreductase</keyword>
<keyword id="KW-0601">Photorespiration</keyword>
<keyword id="KW-0602">Photosynthesis</keyword>
<keyword id="KW-0934">Plastid</keyword>